<feature type="chain" id="PRO_1000083409" description="Large ribosomal subunit protein uL11">
    <location>
        <begin position="1"/>
        <end position="140"/>
    </location>
</feature>
<keyword id="KW-0488">Methylation</keyword>
<keyword id="KW-0687">Ribonucleoprotein</keyword>
<keyword id="KW-0689">Ribosomal protein</keyword>
<keyword id="KW-0694">RNA-binding</keyword>
<keyword id="KW-0699">rRNA-binding</keyword>
<comment type="function">
    <text evidence="1">Forms part of the ribosomal stalk which helps the ribosome interact with GTP-bound translation factors.</text>
</comment>
<comment type="subunit">
    <text evidence="1">Part of the ribosomal stalk of the 50S ribosomal subunit. Interacts with L10 and the large rRNA to form the base of the stalk. L10 forms an elongated spine to which L12 dimers bind in a sequential fashion forming a multimeric L10(L12)X complex.</text>
</comment>
<comment type="PTM">
    <text evidence="1">One or more lysine residues are methylated.</text>
</comment>
<comment type="similarity">
    <text evidence="1">Belongs to the universal ribosomal protein uL11 family.</text>
</comment>
<dbReference type="EMBL" id="CP000730">
    <property type="protein sequence ID" value="ABX28557.1"/>
    <property type="molecule type" value="Genomic_DNA"/>
</dbReference>
<dbReference type="RefSeq" id="WP_001085792.1">
    <property type="nucleotide sequence ID" value="NC_010079.1"/>
</dbReference>
<dbReference type="SMR" id="A8YZN5"/>
<dbReference type="GeneID" id="98344871"/>
<dbReference type="KEGG" id="sax:USA300HOU_0531"/>
<dbReference type="HOGENOM" id="CLU_074237_2_1_9"/>
<dbReference type="GO" id="GO:0022625">
    <property type="term" value="C:cytosolic large ribosomal subunit"/>
    <property type="evidence" value="ECO:0007669"/>
    <property type="project" value="TreeGrafter"/>
</dbReference>
<dbReference type="GO" id="GO:0070180">
    <property type="term" value="F:large ribosomal subunit rRNA binding"/>
    <property type="evidence" value="ECO:0007669"/>
    <property type="project" value="UniProtKB-UniRule"/>
</dbReference>
<dbReference type="GO" id="GO:0003735">
    <property type="term" value="F:structural constituent of ribosome"/>
    <property type="evidence" value="ECO:0007669"/>
    <property type="project" value="InterPro"/>
</dbReference>
<dbReference type="GO" id="GO:0006412">
    <property type="term" value="P:translation"/>
    <property type="evidence" value="ECO:0007669"/>
    <property type="project" value="UniProtKB-UniRule"/>
</dbReference>
<dbReference type="CDD" id="cd00349">
    <property type="entry name" value="Ribosomal_L11"/>
    <property type="match status" value="1"/>
</dbReference>
<dbReference type="FunFam" id="1.10.10.250:FF:000001">
    <property type="entry name" value="50S ribosomal protein L11"/>
    <property type="match status" value="1"/>
</dbReference>
<dbReference type="FunFam" id="3.30.1550.10:FF:000001">
    <property type="entry name" value="50S ribosomal protein L11"/>
    <property type="match status" value="1"/>
</dbReference>
<dbReference type="Gene3D" id="1.10.10.250">
    <property type="entry name" value="Ribosomal protein L11, C-terminal domain"/>
    <property type="match status" value="1"/>
</dbReference>
<dbReference type="Gene3D" id="3.30.1550.10">
    <property type="entry name" value="Ribosomal protein L11/L12, N-terminal domain"/>
    <property type="match status" value="1"/>
</dbReference>
<dbReference type="HAMAP" id="MF_00736">
    <property type="entry name" value="Ribosomal_uL11"/>
    <property type="match status" value="1"/>
</dbReference>
<dbReference type="InterPro" id="IPR000911">
    <property type="entry name" value="Ribosomal_uL11"/>
</dbReference>
<dbReference type="InterPro" id="IPR006519">
    <property type="entry name" value="Ribosomal_uL11_bac-typ"/>
</dbReference>
<dbReference type="InterPro" id="IPR020783">
    <property type="entry name" value="Ribosomal_uL11_C"/>
</dbReference>
<dbReference type="InterPro" id="IPR036769">
    <property type="entry name" value="Ribosomal_uL11_C_sf"/>
</dbReference>
<dbReference type="InterPro" id="IPR020785">
    <property type="entry name" value="Ribosomal_uL11_CS"/>
</dbReference>
<dbReference type="InterPro" id="IPR020784">
    <property type="entry name" value="Ribosomal_uL11_N"/>
</dbReference>
<dbReference type="InterPro" id="IPR036796">
    <property type="entry name" value="Ribosomal_uL11_N_sf"/>
</dbReference>
<dbReference type="NCBIfam" id="TIGR01632">
    <property type="entry name" value="L11_bact"/>
    <property type="match status" value="1"/>
</dbReference>
<dbReference type="PANTHER" id="PTHR11661">
    <property type="entry name" value="60S RIBOSOMAL PROTEIN L12"/>
    <property type="match status" value="1"/>
</dbReference>
<dbReference type="PANTHER" id="PTHR11661:SF1">
    <property type="entry name" value="LARGE RIBOSOMAL SUBUNIT PROTEIN UL11M"/>
    <property type="match status" value="1"/>
</dbReference>
<dbReference type="Pfam" id="PF00298">
    <property type="entry name" value="Ribosomal_L11"/>
    <property type="match status" value="1"/>
</dbReference>
<dbReference type="Pfam" id="PF03946">
    <property type="entry name" value="Ribosomal_L11_N"/>
    <property type="match status" value="1"/>
</dbReference>
<dbReference type="SMART" id="SM00649">
    <property type="entry name" value="RL11"/>
    <property type="match status" value="1"/>
</dbReference>
<dbReference type="SUPFAM" id="SSF54747">
    <property type="entry name" value="Ribosomal L11/L12e N-terminal domain"/>
    <property type="match status" value="1"/>
</dbReference>
<dbReference type="SUPFAM" id="SSF46906">
    <property type="entry name" value="Ribosomal protein L11, C-terminal domain"/>
    <property type="match status" value="1"/>
</dbReference>
<dbReference type="PROSITE" id="PS00359">
    <property type="entry name" value="RIBOSOMAL_L11"/>
    <property type="match status" value="1"/>
</dbReference>
<accession>A8YZN5</accession>
<gene>
    <name evidence="1" type="primary">rplK</name>
    <name type="ordered locus">USA300HOU_0531</name>
</gene>
<name>RL11_STAAT</name>
<sequence length="140" mass="14874">MAKKVDKVVKLQIPAGKANPAPPVGPALGQAGVNIMGFCKEFNARTQDQAGLIIPVEISVYEDRSFTFITKTPPAPVLLKKAAGIEKGSGEPNKTKVATVTKDQVREIANSKMQDLNAADEEAAMRIIEGTARSMGIVVE</sequence>
<organism>
    <name type="scientific">Staphylococcus aureus (strain USA300 / TCH1516)</name>
    <dbReference type="NCBI Taxonomy" id="451516"/>
    <lineage>
        <taxon>Bacteria</taxon>
        <taxon>Bacillati</taxon>
        <taxon>Bacillota</taxon>
        <taxon>Bacilli</taxon>
        <taxon>Bacillales</taxon>
        <taxon>Staphylococcaceae</taxon>
        <taxon>Staphylococcus</taxon>
    </lineage>
</organism>
<proteinExistence type="inferred from homology"/>
<protein>
    <recommendedName>
        <fullName evidence="1">Large ribosomal subunit protein uL11</fullName>
    </recommendedName>
    <alternativeName>
        <fullName evidence="2">50S ribosomal protein L11</fullName>
    </alternativeName>
</protein>
<reference key="1">
    <citation type="journal article" date="2007" name="BMC Microbiol.">
        <title>Subtle genetic changes enhance virulence of methicillin resistant and sensitive Staphylococcus aureus.</title>
        <authorList>
            <person name="Highlander S.K."/>
            <person name="Hulten K.G."/>
            <person name="Qin X."/>
            <person name="Jiang H."/>
            <person name="Yerrapragada S."/>
            <person name="Mason E.O. Jr."/>
            <person name="Shang Y."/>
            <person name="Williams T.M."/>
            <person name="Fortunov R.M."/>
            <person name="Liu Y."/>
            <person name="Igboeli O."/>
            <person name="Petrosino J."/>
            <person name="Tirumalai M."/>
            <person name="Uzman A."/>
            <person name="Fox G.E."/>
            <person name="Cardenas A.M."/>
            <person name="Muzny D.M."/>
            <person name="Hemphill L."/>
            <person name="Ding Y."/>
            <person name="Dugan S."/>
            <person name="Blyth P.R."/>
            <person name="Buhay C.J."/>
            <person name="Dinh H.H."/>
            <person name="Hawes A.C."/>
            <person name="Holder M."/>
            <person name="Kovar C.L."/>
            <person name="Lee S.L."/>
            <person name="Liu W."/>
            <person name="Nazareth L.V."/>
            <person name="Wang Q."/>
            <person name="Zhou J."/>
            <person name="Kaplan S.L."/>
            <person name="Weinstock G.M."/>
        </authorList>
    </citation>
    <scope>NUCLEOTIDE SEQUENCE [LARGE SCALE GENOMIC DNA]</scope>
    <source>
        <strain>USA300 / TCH1516</strain>
    </source>
</reference>
<evidence type="ECO:0000255" key="1">
    <source>
        <dbReference type="HAMAP-Rule" id="MF_00736"/>
    </source>
</evidence>
<evidence type="ECO:0000305" key="2"/>